<reference key="1">
    <citation type="journal article" date="2001" name="Nature">
        <title>Complete genome sequence of a multiple drug resistant Salmonella enterica serovar Typhi CT18.</title>
        <authorList>
            <person name="Parkhill J."/>
            <person name="Dougan G."/>
            <person name="James K.D."/>
            <person name="Thomson N.R."/>
            <person name="Pickard D."/>
            <person name="Wain J."/>
            <person name="Churcher C.M."/>
            <person name="Mungall K.L."/>
            <person name="Bentley S.D."/>
            <person name="Holden M.T.G."/>
            <person name="Sebaihia M."/>
            <person name="Baker S."/>
            <person name="Basham D."/>
            <person name="Brooks K."/>
            <person name="Chillingworth T."/>
            <person name="Connerton P."/>
            <person name="Cronin A."/>
            <person name="Davis P."/>
            <person name="Davies R.M."/>
            <person name="Dowd L."/>
            <person name="White N."/>
            <person name="Farrar J."/>
            <person name="Feltwell T."/>
            <person name="Hamlin N."/>
            <person name="Haque A."/>
            <person name="Hien T.T."/>
            <person name="Holroyd S."/>
            <person name="Jagels K."/>
            <person name="Krogh A."/>
            <person name="Larsen T.S."/>
            <person name="Leather S."/>
            <person name="Moule S."/>
            <person name="O'Gaora P."/>
            <person name="Parry C."/>
            <person name="Quail M.A."/>
            <person name="Rutherford K.M."/>
            <person name="Simmonds M."/>
            <person name="Skelton J."/>
            <person name="Stevens K."/>
            <person name="Whitehead S."/>
            <person name="Barrell B.G."/>
        </authorList>
    </citation>
    <scope>NUCLEOTIDE SEQUENCE [LARGE SCALE GENOMIC DNA]</scope>
    <source>
        <strain>CT18</strain>
    </source>
</reference>
<reference key="2">
    <citation type="journal article" date="2003" name="J. Bacteriol.">
        <title>Comparative genomics of Salmonella enterica serovar Typhi strains Ty2 and CT18.</title>
        <authorList>
            <person name="Deng W."/>
            <person name="Liou S.-R."/>
            <person name="Plunkett G. III"/>
            <person name="Mayhew G.F."/>
            <person name="Rose D.J."/>
            <person name="Burland V."/>
            <person name="Kodoyianni V."/>
            <person name="Schwartz D.C."/>
            <person name="Blattner F.R."/>
        </authorList>
    </citation>
    <scope>NUCLEOTIDE SEQUENCE [LARGE SCALE GENOMIC DNA]</scope>
    <source>
        <strain>ATCC 700931 / Ty2</strain>
    </source>
</reference>
<gene>
    <name evidence="1" type="primary">fadA</name>
    <name type="ordered locus">STY3578</name>
    <name type="ordered locus">t3316</name>
</gene>
<sequence>MEQVVIVDAIRTPMGRSKGGAFRNVRAEDLSAHLMRSLLARNPSLTAATLDDIYWGCVQQTLEQGFNIARNAALLAEIPHSVPAVTVNRLCGSSMQALHDAARMIMTGDAQVCLVGGVEHMGHVPMSHGVDFHPGLSRNVAKAAGMMGLTAEMLSRLHGISREMQDQFAARSHARAWAATQSGAFKTEIIPTGGHDADGVLKQFNYDEVIRPETTVEALSTLRPAFDPVSGTVTAGTSSALSDGAAAMLVMSESRARELGLKPRARIRSMAVVGCDPSIMGYGPVPASKLALKKAGLSASDIDVFEMNEAFAAQILPCIKDLGLMEQIDEKINLNGGAIALGHPLGCSGARISTTLINLMERKDAQFGLATMCIGLGQGIATVFERV</sequence>
<comment type="function">
    <text evidence="1">Catalyzes the final step of fatty acid oxidation in which acetyl-CoA is released and the CoA ester of a fatty acid two carbons shorter is formed. Involved in the aerobic and anaerobic degradation of long-chain fatty acids (By similarity).</text>
</comment>
<comment type="catalytic activity">
    <reaction evidence="1">
        <text>an acyl-CoA + acetyl-CoA = a 3-oxoacyl-CoA + CoA</text>
        <dbReference type="Rhea" id="RHEA:21564"/>
        <dbReference type="ChEBI" id="CHEBI:57287"/>
        <dbReference type="ChEBI" id="CHEBI:57288"/>
        <dbReference type="ChEBI" id="CHEBI:58342"/>
        <dbReference type="ChEBI" id="CHEBI:90726"/>
        <dbReference type="EC" id="2.3.1.16"/>
    </reaction>
</comment>
<comment type="pathway">
    <text evidence="1">Lipid metabolism; fatty acid beta-oxidation.</text>
</comment>
<comment type="subunit">
    <text evidence="1">Heterotetramer of two alpha chains (FadB) and two beta chains (FadA).</text>
</comment>
<comment type="subcellular location">
    <subcellularLocation>
        <location evidence="1">Cytoplasm</location>
    </subcellularLocation>
</comment>
<comment type="similarity">
    <text evidence="1">Belongs to the thiolase-like superfamily. Thiolase family.</text>
</comment>
<organism>
    <name type="scientific">Salmonella typhi</name>
    <dbReference type="NCBI Taxonomy" id="90370"/>
    <lineage>
        <taxon>Bacteria</taxon>
        <taxon>Pseudomonadati</taxon>
        <taxon>Pseudomonadota</taxon>
        <taxon>Gammaproteobacteria</taxon>
        <taxon>Enterobacterales</taxon>
        <taxon>Enterobacteriaceae</taxon>
        <taxon>Salmonella</taxon>
    </lineage>
</organism>
<accession>P0A2H8</accession>
<accession>Q9L6L6</accession>
<name>FADA_SALTI</name>
<evidence type="ECO:0000255" key="1">
    <source>
        <dbReference type="HAMAP-Rule" id="MF_01620"/>
    </source>
</evidence>
<proteinExistence type="inferred from homology"/>
<dbReference type="EC" id="2.3.1.16" evidence="1"/>
<dbReference type="EMBL" id="AL513382">
    <property type="protein sequence ID" value="CAD07911.1"/>
    <property type="molecule type" value="Genomic_DNA"/>
</dbReference>
<dbReference type="EMBL" id="AE014613">
    <property type="protein sequence ID" value="AAO70844.1"/>
    <property type="molecule type" value="Genomic_DNA"/>
</dbReference>
<dbReference type="RefSeq" id="NP_457770.1">
    <property type="nucleotide sequence ID" value="NC_003198.1"/>
</dbReference>
<dbReference type="RefSeq" id="WP_000438778.1">
    <property type="nucleotide sequence ID" value="NZ_WSUR01000033.1"/>
</dbReference>
<dbReference type="SMR" id="P0A2H8"/>
<dbReference type="STRING" id="220341.gene:17587430"/>
<dbReference type="KEGG" id="stt:t3316"/>
<dbReference type="KEGG" id="sty:STY3578"/>
<dbReference type="PATRIC" id="fig|220341.7.peg.3645"/>
<dbReference type="eggNOG" id="COG0183">
    <property type="taxonomic scope" value="Bacteria"/>
</dbReference>
<dbReference type="HOGENOM" id="CLU_031026_2_3_6"/>
<dbReference type="OMA" id="RWCASSM"/>
<dbReference type="OrthoDB" id="9764638at2"/>
<dbReference type="UniPathway" id="UPA00659"/>
<dbReference type="Proteomes" id="UP000000541">
    <property type="component" value="Chromosome"/>
</dbReference>
<dbReference type="Proteomes" id="UP000002670">
    <property type="component" value="Chromosome"/>
</dbReference>
<dbReference type="GO" id="GO:0005737">
    <property type="term" value="C:cytoplasm"/>
    <property type="evidence" value="ECO:0007669"/>
    <property type="project" value="UniProtKB-SubCell"/>
</dbReference>
<dbReference type="GO" id="GO:0003988">
    <property type="term" value="F:acetyl-CoA C-acyltransferase activity"/>
    <property type="evidence" value="ECO:0007669"/>
    <property type="project" value="UniProtKB-UniRule"/>
</dbReference>
<dbReference type="GO" id="GO:0006635">
    <property type="term" value="P:fatty acid beta-oxidation"/>
    <property type="evidence" value="ECO:0007669"/>
    <property type="project" value="UniProtKB-UniRule"/>
</dbReference>
<dbReference type="GO" id="GO:0010124">
    <property type="term" value="P:phenylacetate catabolic process"/>
    <property type="evidence" value="ECO:0007669"/>
    <property type="project" value="TreeGrafter"/>
</dbReference>
<dbReference type="CDD" id="cd00751">
    <property type="entry name" value="thiolase"/>
    <property type="match status" value="1"/>
</dbReference>
<dbReference type="FunFam" id="3.40.47.10:FF:000010">
    <property type="entry name" value="Acetyl-CoA acetyltransferase (Thiolase)"/>
    <property type="match status" value="1"/>
</dbReference>
<dbReference type="Gene3D" id="3.40.47.10">
    <property type="match status" value="2"/>
</dbReference>
<dbReference type="HAMAP" id="MF_01620">
    <property type="entry name" value="FadA"/>
    <property type="match status" value="1"/>
</dbReference>
<dbReference type="InterPro" id="IPR012805">
    <property type="entry name" value="FadA"/>
</dbReference>
<dbReference type="InterPro" id="IPR002155">
    <property type="entry name" value="Thiolase"/>
</dbReference>
<dbReference type="InterPro" id="IPR016039">
    <property type="entry name" value="Thiolase-like"/>
</dbReference>
<dbReference type="InterPro" id="IPR050215">
    <property type="entry name" value="Thiolase-like_sf_Thiolase"/>
</dbReference>
<dbReference type="InterPro" id="IPR020615">
    <property type="entry name" value="Thiolase_acyl_enz_int_AS"/>
</dbReference>
<dbReference type="InterPro" id="IPR020610">
    <property type="entry name" value="Thiolase_AS"/>
</dbReference>
<dbReference type="InterPro" id="IPR020617">
    <property type="entry name" value="Thiolase_C"/>
</dbReference>
<dbReference type="InterPro" id="IPR020613">
    <property type="entry name" value="Thiolase_CS"/>
</dbReference>
<dbReference type="InterPro" id="IPR020616">
    <property type="entry name" value="Thiolase_N"/>
</dbReference>
<dbReference type="NCBIfam" id="TIGR01930">
    <property type="entry name" value="AcCoA-C-Actrans"/>
    <property type="match status" value="1"/>
</dbReference>
<dbReference type="NCBIfam" id="TIGR02445">
    <property type="entry name" value="fadA"/>
    <property type="match status" value="1"/>
</dbReference>
<dbReference type="NCBIfam" id="NF006510">
    <property type="entry name" value="PRK08947.1"/>
    <property type="match status" value="1"/>
</dbReference>
<dbReference type="PANTHER" id="PTHR43853:SF11">
    <property type="entry name" value="3-KETOACYL-COA THIOLASE FADA"/>
    <property type="match status" value="1"/>
</dbReference>
<dbReference type="PANTHER" id="PTHR43853">
    <property type="entry name" value="3-KETOACYL-COA THIOLASE, PEROXISOMAL"/>
    <property type="match status" value="1"/>
</dbReference>
<dbReference type="Pfam" id="PF02803">
    <property type="entry name" value="Thiolase_C"/>
    <property type="match status" value="1"/>
</dbReference>
<dbReference type="Pfam" id="PF00108">
    <property type="entry name" value="Thiolase_N"/>
    <property type="match status" value="1"/>
</dbReference>
<dbReference type="PIRSF" id="PIRSF000429">
    <property type="entry name" value="Ac-CoA_Ac_transf"/>
    <property type="match status" value="1"/>
</dbReference>
<dbReference type="SUPFAM" id="SSF53901">
    <property type="entry name" value="Thiolase-like"/>
    <property type="match status" value="2"/>
</dbReference>
<dbReference type="PROSITE" id="PS00098">
    <property type="entry name" value="THIOLASE_1"/>
    <property type="match status" value="1"/>
</dbReference>
<dbReference type="PROSITE" id="PS00737">
    <property type="entry name" value="THIOLASE_2"/>
    <property type="match status" value="1"/>
</dbReference>
<dbReference type="PROSITE" id="PS00099">
    <property type="entry name" value="THIOLASE_3"/>
    <property type="match status" value="1"/>
</dbReference>
<protein>
    <recommendedName>
        <fullName evidence="1">3-ketoacyl-CoA thiolase</fullName>
        <ecNumber evidence="1">2.3.1.16</ecNumber>
    </recommendedName>
    <alternativeName>
        <fullName evidence="1">Acetyl-CoA acyltransferase</fullName>
    </alternativeName>
    <alternativeName>
        <fullName evidence="1">Beta-ketothiolase</fullName>
    </alternativeName>
    <alternativeName>
        <fullName evidence="1">Fatty acid oxidation complex subunit beta</fullName>
    </alternativeName>
</protein>
<keyword id="KW-0012">Acyltransferase</keyword>
<keyword id="KW-0963">Cytoplasm</keyword>
<keyword id="KW-0276">Fatty acid metabolism</keyword>
<keyword id="KW-0442">Lipid degradation</keyword>
<keyword id="KW-0443">Lipid metabolism</keyword>
<keyword id="KW-0808">Transferase</keyword>
<feature type="chain" id="PRO_0000206390" description="3-ketoacyl-CoA thiolase">
    <location>
        <begin position="1"/>
        <end position="387"/>
    </location>
</feature>
<feature type="active site" description="Acyl-thioester intermediate" evidence="1">
    <location>
        <position position="91"/>
    </location>
</feature>
<feature type="active site" description="Proton acceptor" evidence="1">
    <location>
        <position position="343"/>
    </location>
</feature>
<feature type="active site" description="Proton acceptor" evidence="1">
    <location>
        <position position="373"/>
    </location>
</feature>